<keyword id="KW-0998">Cell outer membrane</keyword>
<keyword id="KW-0472">Membrane</keyword>
<keyword id="KW-0732">Signal</keyword>
<feature type="signal peptide" evidence="1">
    <location>
        <begin position="1"/>
        <end position="22"/>
    </location>
</feature>
<feature type="chain" id="PRO_0000281640" description="LPS-assembly protein LptD">
    <location>
        <begin position="23"/>
        <end position="809"/>
    </location>
</feature>
<sequence length="809" mass="91893">MRRALRLLPLPLSIAICLPAMAADKPLNWGLCPAVDPLPGFDGAPAADPKAAEIRQQLPTDIEGDQLSGTSTTPQYQGNVALKRGDQFLGADNLRMDTETGNYIAEGNVRYQDTSFRMVADRAEGNQDTDSHKVTNIQYQLVDRRGNGGAESVDLQGQVGQMHRSTYTTCDPSQPIWRVRAPEIDVDNDEGFGTARNAVLQIGKVPVLYFPWFKFPIDDRRMTGLLFPQFGLSGRNGFDYLQPIYLNLAPNYDATLLPRYMSRRGFMFGTEFRYLYDGGRGEITGNYLPNDNLRKKDRGSVFYSGYHNVNRYWQARSSISWVSDTRYVEDFTSRINGMGSASSIQSTVGIYGTGETWTAGLMADRWQLTDYTLDERSLPYNRQPRAYFTWEKPFGIFEAGVYAEAVRFTHDDSYLVQPPRDGNTNGDDGDDYVRTNIRNQEYGSGSRLDLKPYISMPLSGSAWFLTPTVAWRYTAYQLDSTLANTAPLTGDRSPTRSLPIASLDAGLYFDRETSLFGTKYLNTLEPRAYYLYVPYREQNDLPVFDTRPFTFSYGQLFRDTRYTGADRQNDANQLTLAVTSRWLRQDDGREKLSLSAGQILYFNDSLVTINNSTNAAAGSEQTIEQGKSAWVADANYMINDRWSMGATYQWNPNSRKEDLASLRTRYLLNNDGIINLAYRYRRNLIDESDQLKQADFSFLYPINPTWSAVGRYYYSLLDRKPLEIIGGVQWDSCCLAVRALVRRFVRNRDGEMDNSIQFEFVLKGLSSFGQNTDRTLRRAILGYYRDDLYLVPPSNTTTNPDDYDPNLIP</sequence>
<comment type="function">
    <text evidence="1">Together with LptE, is involved in the assembly of lipopolysaccharide (LPS) at the surface of the outer membrane.</text>
</comment>
<comment type="subunit">
    <text evidence="1">Component of the lipopolysaccharide transport and assembly complex. Interacts with LptE and LptA.</text>
</comment>
<comment type="subcellular location">
    <subcellularLocation>
        <location evidence="1">Cell outer membrane</location>
    </subcellularLocation>
</comment>
<comment type="similarity">
    <text evidence="1">Belongs to the LptD family.</text>
</comment>
<dbReference type="EMBL" id="CP000050">
    <property type="protein sequence ID" value="AAY50481.1"/>
    <property type="molecule type" value="Genomic_DNA"/>
</dbReference>
<dbReference type="RefSeq" id="WP_011036030.1">
    <property type="nucleotide sequence ID" value="NZ_CP155948.1"/>
</dbReference>
<dbReference type="SMR" id="Q4UR42"/>
<dbReference type="KEGG" id="xcb:XC_3437"/>
<dbReference type="HOGENOM" id="CLU_009039_0_0_6"/>
<dbReference type="Proteomes" id="UP000000420">
    <property type="component" value="Chromosome"/>
</dbReference>
<dbReference type="GO" id="GO:0009279">
    <property type="term" value="C:cell outer membrane"/>
    <property type="evidence" value="ECO:0007669"/>
    <property type="project" value="UniProtKB-SubCell"/>
</dbReference>
<dbReference type="GO" id="GO:1990351">
    <property type="term" value="C:transporter complex"/>
    <property type="evidence" value="ECO:0007669"/>
    <property type="project" value="TreeGrafter"/>
</dbReference>
<dbReference type="GO" id="GO:0043165">
    <property type="term" value="P:Gram-negative-bacterium-type cell outer membrane assembly"/>
    <property type="evidence" value="ECO:0007669"/>
    <property type="project" value="UniProtKB-UniRule"/>
</dbReference>
<dbReference type="GO" id="GO:0015920">
    <property type="term" value="P:lipopolysaccharide transport"/>
    <property type="evidence" value="ECO:0007669"/>
    <property type="project" value="InterPro"/>
</dbReference>
<dbReference type="HAMAP" id="MF_01411">
    <property type="entry name" value="LPS_assembly_LptD"/>
    <property type="match status" value="1"/>
</dbReference>
<dbReference type="InterPro" id="IPR020889">
    <property type="entry name" value="LipoPS_assembly_LptD"/>
</dbReference>
<dbReference type="InterPro" id="IPR050218">
    <property type="entry name" value="LptD"/>
</dbReference>
<dbReference type="InterPro" id="IPR007543">
    <property type="entry name" value="LptD_C"/>
</dbReference>
<dbReference type="InterPro" id="IPR005653">
    <property type="entry name" value="OstA-like_N"/>
</dbReference>
<dbReference type="NCBIfam" id="NF003358">
    <property type="entry name" value="PRK04423.1"/>
    <property type="match status" value="1"/>
</dbReference>
<dbReference type="PANTHER" id="PTHR30189">
    <property type="entry name" value="LPS-ASSEMBLY PROTEIN"/>
    <property type="match status" value="1"/>
</dbReference>
<dbReference type="PANTHER" id="PTHR30189:SF1">
    <property type="entry name" value="LPS-ASSEMBLY PROTEIN LPTD"/>
    <property type="match status" value="1"/>
</dbReference>
<dbReference type="Pfam" id="PF04453">
    <property type="entry name" value="LptD"/>
    <property type="match status" value="1"/>
</dbReference>
<dbReference type="Pfam" id="PF03968">
    <property type="entry name" value="LptD_N"/>
    <property type="match status" value="1"/>
</dbReference>
<evidence type="ECO:0000255" key="1">
    <source>
        <dbReference type="HAMAP-Rule" id="MF_01411"/>
    </source>
</evidence>
<protein>
    <recommendedName>
        <fullName evidence="1">LPS-assembly protein LptD</fullName>
    </recommendedName>
</protein>
<name>LPTD_XANC8</name>
<organism>
    <name type="scientific">Xanthomonas campestris pv. campestris (strain 8004)</name>
    <dbReference type="NCBI Taxonomy" id="314565"/>
    <lineage>
        <taxon>Bacteria</taxon>
        <taxon>Pseudomonadati</taxon>
        <taxon>Pseudomonadota</taxon>
        <taxon>Gammaproteobacteria</taxon>
        <taxon>Lysobacterales</taxon>
        <taxon>Lysobacteraceae</taxon>
        <taxon>Xanthomonas</taxon>
    </lineage>
</organism>
<gene>
    <name evidence="1" type="primary">lptD</name>
    <name type="synonym">imp</name>
    <name type="synonym">ostA</name>
    <name type="ordered locus">XC_3437</name>
</gene>
<accession>Q4UR42</accession>
<proteinExistence type="inferred from homology"/>
<reference key="1">
    <citation type="journal article" date="2005" name="Genome Res.">
        <title>Comparative and functional genomic analyses of the pathogenicity of phytopathogen Xanthomonas campestris pv. campestris.</title>
        <authorList>
            <person name="Qian W."/>
            <person name="Jia Y."/>
            <person name="Ren S.-X."/>
            <person name="He Y.-Q."/>
            <person name="Feng J.-X."/>
            <person name="Lu L.-F."/>
            <person name="Sun Q."/>
            <person name="Ying G."/>
            <person name="Tang D.-J."/>
            <person name="Tang H."/>
            <person name="Wu W."/>
            <person name="Hao P."/>
            <person name="Wang L."/>
            <person name="Jiang B.-L."/>
            <person name="Zeng S."/>
            <person name="Gu W.-Y."/>
            <person name="Lu G."/>
            <person name="Rong L."/>
            <person name="Tian Y."/>
            <person name="Yao Z."/>
            <person name="Fu G."/>
            <person name="Chen B."/>
            <person name="Fang R."/>
            <person name="Qiang B."/>
            <person name="Chen Z."/>
            <person name="Zhao G.-P."/>
            <person name="Tang J.-L."/>
            <person name="He C."/>
        </authorList>
    </citation>
    <scope>NUCLEOTIDE SEQUENCE [LARGE SCALE GENOMIC DNA]</scope>
    <source>
        <strain>8004</strain>
    </source>
</reference>